<evidence type="ECO:0000255" key="1">
    <source>
        <dbReference type="HAMAP-Rule" id="MF_00260"/>
    </source>
</evidence>
<reference key="1">
    <citation type="journal article" date="2009" name="ISME J.">
        <title>The genome sequence of the psychrophilic archaeon, Methanococcoides burtonii: the role of genome evolution in cold adaptation.</title>
        <authorList>
            <person name="Allen M.A."/>
            <person name="Lauro F.M."/>
            <person name="Williams T.J."/>
            <person name="Burg D."/>
            <person name="Siddiqui K.S."/>
            <person name="De Francisci D."/>
            <person name="Chong K.W."/>
            <person name="Pilak O."/>
            <person name="Chew H.H."/>
            <person name="De Maere M.Z."/>
            <person name="Ting L."/>
            <person name="Katrib M."/>
            <person name="Ng C."/>
            <person name="Sowers K.R."/>
            <person name="Galperin M.Y."/>
            <person name="Anderson I.J."/>
            <person name="Ivanova N."/>
            <person name="Dalin E."/>
            <person name="Martinez M."/>
            <person name="Lapidus A."/>
            <person name="Hauser L."/>
            <person name="Land M."/>
            <person name="Thomas T."/>
            <person name="Cavicchioli R."/>
        </authorList>
    </citation>
    <scope>NUCLEOTIDE SEQUENCE [LARGE SCALE GENOMIC DNA]</scope>
    <source>
        <strain>DSM 6242 / NBRC 107633 / OCM 468 / ACE-M</strain>
    </source>
</reference>
<organism>
    <name type="scientific">Methanococcoides burtonii (strain DSM 6242 / NBRC 107633 / OCM 468 / ACE-M)</name>
    <dbReference type="NCBI Taxonomy" id="259564"/>
    <lineage>
        <taxon>Archaea</taxon>
        <taxon>Methanobacteriati</taxon>
        <taxon>Methanobacteriota</taxon>
        <taxon>Stenosarchaea group</taxon>
        <taxon>Methanomicrobia</taxon>
        <taxon>Methanosarcinales</taxon>
        <taxon>Methanosarcinaceae</taxon>
        <taxon>Methanococcoides</taxon>
    </lineage>
</organism>
<protein>
    <recommendedName>
        <fullName evidence="1">Probable porphobilinogen deaminase</fullName>
        <shortName evidence="1">PBG</shortName>
        <ecNumber evidence="1">2.5.1.61</ecNumber>
    </recommendedName>
    <alternativeName>
        <fullName evidence="1">Hydroxymethylbilane synthase</fullName>
        <shortName evidence="1">HMBS</shortName>
    </alternativeName>
    <alternativeName>
        <fullName evidence="1">Pre-uroporphyrinogen synthase</fullName>
    </alternativeName>
</protein>
<proteinExistence type="inferred from homology"/>
<accession>Q12WM8</accession>
<comment type="function">
    <text evidence="1">Tetrapolymerization of the monopyrrole PBG into the hydroxymethylbilane pre-uroporphyrinogen in several discrete steps.</text>
</comment>
<comment type="catalytic activity">
    <reaction evidence="1">
        <text>4 porphobilinogen + H2O = hydroxymethylbilane + 4 NH4(+)</text>
        <dbReference type="Rhea" id="RHEA:13185"/>
        <dbReference type="ChEBI" id="CHEBI:15377"/>
        <dbReference type="ChEBI" id="CHEBI:28938"/>
        <dbReference type="ChEBI" id="CHEBI:57845"/>
        <dbReference type="ChEBI" id="CHEBI:58126"/>
        <dbReference type="EC" id="2.5.1.61"/>
    </reaction>
</comment>
<comment type="cofactor">
    <cofactor evidence="1">
        <name>dipyrromethane</name>
        <dbReference type="ChEBI" id="CHEBI:60342"/>
    </cofactor>
    <text evidence="1">Binds 1 dipyrromethane group covalently.</text>
</comment>
<comment type="pathway">
    <text evidence="1">Porphyrin-containing compound metabolism; protoporphyrin-IX biosynthesis; coproporphyrinogen-III from 5-aminolevulinate: step 2/4.</text>
</comment>
<comment type="miscellaneous">
    <text evidence="1">The porphobilinogen subunits are added to the dipyrromethane group.</text>
</comment>
<comment type="similarity">
    <text evidence="1">Belongs to the HMBS family.</text>
</comment>
<gene>
    <name evidence="1" type="primary">hemC</name>
    <name type="ordered locus">Mbur_1226</name>
</gene>
<name>HEM3_METBU</name>
<keyword id="KW-0627">Porphyrin biosynthesis</keyword>
<keyword id="KW-0808">Transferase</keyword>
<feature type="chain" id="PRO_0000304301" description="Probable porphobilinogen deaminase">
    <location>
        <begin position="1"/>
        <end position="309"/>
    </location>
</feature>
<feature type="modified residue" description="S-(dipyrrolylmethanemethyl)cysteine" evidence="1">
    <location>
        <position position="233"/>
    </location>
</feature>
<sequence>MILGTRGSALAIAQADLVTKMLEEKGHELTRNVIKTSGDVFTDRPLHEVAGVGVFVRELDDRMIEGEVDIAVHSMKDLPTVRPPELAIAAVLKRDSPYDVLLTADGSTLDELPDGAIIGTTSMRRRAQLLRYRPDLNVEDLRGNINTRIQKLKAGQYDGILLAEAGLQRMGWDMDVQRLPAEAFCPSANQGTIVVVTRADDEAERACSVLNHERSRMETEVERLLITDVEGGCIVPIGSFAQMNEDGDEIHVLVEVLAVDGTREIRIEDDIPVKNYREHALSIGRMLVEMGGKELVQEAVCEMSGCDDE</sequence>
<dbReference type="EC" id="2.5.1.61" evidence="1"/>
<dbReference type="EMBL" id="CP000300">
    <property type="protein sequence ID" value="ABE52148.1"/>
    <property type="molecule type" value="Genomic_DNA"/>
</dbReference>
<dbReference type="RefSeq" id="WP_011499294.1">
    <property type="nucleotide sequence ID" value="NC_007955.1"/>
</dbReference>
<dbReference type="SMR" id="Q12WM8"/>
<dbReference type="STRING" id="259564.Mbur_1226"/>
<dbReference type="GeneID" id="3998550"/>
<dbReference type="KEGG" id="mbu:Mbur_1226"/>
<dbReference type="HOGENOM" id="CLU_019704_0_2_2"/>
<dbReference type="OrthoDB" id="8042at2157"/>
<dbReference type="UniPathway" id="UPA00251">
    <property type="reaction ID" value="UER00319"/>
</dbReference>
<dbReference type="Proteomes" id="UP000001979">
    <property type="component" value="Chromosome"/>
</dbReference>
<dbReference type="GO" id="GO:0005737">
    <property type="term" value="C:cytoplasm"/>
    <property type="evidence" value="ECO:0007669"/>
    <property type="project" value="TreeGrafter"/>
</dbReference>
<dbReference type="GO" id="GO:0004418">
    <property type="term" value="F:hydroxymethylbilane synthase activity"/>
    <property type="evidence" value="ECO:0007669"/>
    <property type="project" value="UniProtKB-UniRule"/>
</dbReference>
<dbReference type="GO" id="GO:0006782">
    <property type="term" value="P:protoporphyrinogen IX biosynthetic process"/>
    <property type="evidence" value="ECO:0007669"/>
    <property type="project" value="UniProtKB-UniRule"/>
</dbReference>
<dbReference type="FunFam" id="3.40.190.10:FF:000005">
    <property type="entry name" value="Porphobilinogen deaminase"/>
    <property type="match status" value="1"/>
</dbReference>
<dbReference type="Gene3D" id="3.40.190.10">
    <property type="entry name" value="Periplasmic binding protein-like II"/>
    <property type="match status" value="2"/>
</dbReference>
<dbReference type="Gene3D" id="3.30.160.40">
    <property type="entry name" value="Porphobilinogen deaminase, C-terminal domain"/>
    <property type="match status" value="1"/>
</dbReference>
<dbReference type="HAMAP" id="MF_00260">
    <property type="entry name" value="Porphobil_deam"/>
    <property type="match status" value="1"/>
</dbReference>
<dbReference type="InterPro" id="IPR000860">
    <property type="entry name" value="HemC"/>
</dbReference>
<dbReference type="InterPro" id="IPR022419">
    <property type="entry name" value="Porphobilin_deaminase_cofac_BS"/>
</dbReference>
<dbReference type="InterPro" id="IPR022417">
    <property type="entry name" value="Porphobilin_deaminase_N"/>
</dbReference>
<dbReference type="InterPro" id="IPR022418">
    <property type="entry name" value="Porphobilinogen_deaminase_C"/>
</dbReference>
<dbReference type="InterPro" id="IPR036803">
    <property type="entry name" value="Porphobilinogen_deaminase_C_sf"/>
</dbReference>
<dbReference type="NCBIfam" id="TIGR00212">
    <property type="entry name" value="hemC"/>
    <property type="match status" value="1"/>
</dbReference>
<dbReference type="PANTHER" id="PTHR11557">
    <property type="entry name" value="PORPHOBILINOGEN DEAMINASE"/>
    <property type="match status" value="1"/>
</dbReference>
<dbReference type="PANTHER" id="PTHR11557:SF0">
    <property type="entry name" value="PORPHOBILINOGEN DEAMINASE"/>
    <property type="match status" value="1"/>
</dbReference>
<dbReference type="Pfam" id="PF01379">
    <property type="entry name" value="Porphobil_deam"/>
    <property type="match status" value="1"/>
</dbReference>
<dbReference type="Pfam" id="PF03900">
    <property type="entry name" value="Porphobil_deamC"/>
    <property type="match status" value="1"/>
</dbReference>
<dbReference type="PIRSF" id="PIRSF001438">
    <property type="entry name" value="4pyrrol_synth_OHMeBilane_synth"/>
    <property type="match status" value="1"/>
</dbReference>
<dbReference type="PRINTS" id="PR00151">
    <property type="entry name" value="PORPHBDMNASE"/>
</dbReference>
<dbReference type="SUPFAM" id="SSF53850">
    <property type="entry name" value="Periplasmic binding protein-like II"/>
    <property type="match status" value="1"/>
</dbReference>
<dbReference type="SUPFAM" id="SSF54782">
    <property type="entry name" value="Porphobilinogen deaminase (hydroxymethylbilane synthase), C-terminal domain"/>
    <property type="match status" value="1"/>
</dbReference>
<dbReference type="PROSITE" id="PS00533">
    <property type="entry name" value="PORPHOBILINOGEN_DEAM"/>
    <property type="match status" value="1"/>
</dbReference>